<sequence length="496" mass="53603">MMTMPLSKLFAHASRDPLIRELTLDSRSVRPGDLFLAVPGAKVDGREHIADALARGAAAVAYEEQGANVLPLTDVPLIPVKGLIAQLSDIAGRFYGEPSRQLNLVGVTGTNGKTSVTQLVAQALDLLGQRCGLIGTLGTGFYGELQSGRLTTPDPIAVQSTLNDLKKGGARAVAMEVSSHALEQGRVAALEFDIAVMTNLSRDHLDYHGSMEAYEAAKAKLFAWPSLRCQVVNLDDDFGRRLAADFARRPSVDHIETRLLSYSLESPEASLFCREAVFSDDGVRATLVTAQGERILRSQLLGRFNLSNMLAAVATLLALDYALDEILKVTPQLQGPVGRMQRLGGGDKPLVVVDYAHTPDALEKVLEALRPHAHGKLLCLFGCGGDRDRGKRPLMAEVAERLADRVLVTDDNPRTEDPSRIFDDIRPGFTRPDDVEFVAGRGEAIAHLIATAAANDVIVLAGKGHEDYQEINGERHDFSDLTEAEKALAAWEAPHA</sequence>
<evidence type="ECO:0000255" key="1">
    <source>
        <dbReference type="HAMAP-Rule" id="MF_00208"/>
    </source>
</evidence>
<proteinExistence type="inferred from homology"/>
<keyword id="KW-0067">ATP-binding</keyword>
<keyword id="KW-0131">Cell cycle</keyword>
<keyword id="KW-0132">Cell division</keyword>
<keyword id="KW-0133">Cell shape</keyword>
<keyword id="KW-0961">Cell wall biogenesis/degradation</keyword>
<keyword id="KW-0963">Cytoplasm</keyword>
<keyword id="KW-0436">Ligase</keyword>
<keyword id="KW-0460">Magnesium</keyword>
<keyword id="KW-0547">Nucleotide-binding</keyword>
<keyword id="KW-0573">Peptidoglycan synthesis</keyword>
<keyword id="KW-1185">Reference proteome</keyword>
<organism>
    <name type="scientific">Pseudomonas putida (strain ATCC 47054 / DSM 6125 / CFBP 8728 / NCIMB 11950 / KT2440)</name>
    <dbReference type="NCBI Taxonomy" id="160488"/>
    <lineage>
        <taxon>Bacteria</taxon>
        <taxon>Pseudomonadati</taxon>
        <taxon>Pseudomonadota</taxon>
        <taxon>Gammaproteobacteria</taxon>
        <taxon>Pseudomonadales</taxon>
        <taxon>Pseudomonadaceae</taxon>
        <taxon>Pseudomonas</taxon>
    </lineage>
</organism>
<feature type="chain" id="PRO_0000101927" description="UDP-N-acetylmuramoyl-L-alanyl-D-glutamate--2,6-diaminopimelate ligase">
    <location>
        <begin position="1"/>
        <end position="496"/>
    </location>
</feature>
<feature type="short sequence motif" description="Meso-diaminopimelate recognition motif">
    <location>
        <begin position="411"/>
        <end position="414"/>
    </location>
</feature>
<feature type="binding site" evidence="1">
    <location>
        <position position="24"/>
    </location>
    <ligand>
        <name>UDP-N-acetyl-alpha-D-muramoyl-L-alanyl-D-glutamate</name>
        <dbReference type="ChEBI" id="CHEBI:83900"/>
    </ligand>
</feature>
<feature type="binding site" evidence="1">
    <location>
        <position position="26"/>
    </location>
    <ligand>
        <name>UDP-N-acetyl-alpha-D-muramoyl-L-alanyl-D-glutamate</name>
        <dbReference type="ChEBI" id="CHEBI:83900"/>
    </ligand>
</feature>
<feature type="binding site" evidence="1">
    <location>
        <begin position="109"/>
        <end position="115"/>
    </location>
    <ligand>
        <name>ATP</name>
        <dbReference type="ChEBI" id="CHEBI:30616"/>
    </ligand>
</feature>
<feature type="binding site" evidence="1">
    <location>
        <begin position="151"/>
        <end position="152"/>
    </location>
    <ligand>
        <name>UDP-N-acetyl-alpha-D-muramoyl-L-alanyl-D-glutamate</name>
        <dbReference type="ChEBI" id="CHEBI:83900"/>
    </ligand>
</feature>
<feature type="binding site" evidence="1">
    <location>
        <position position="178"/>
    </location>
    <ligand>
        <name>UDP-N-acetyl-alpha-D-muramoyl-L-alanyl-D-glutamate</name>
        <dbReference type="ChEBI" id="CHEBI:83900"/>
    </ligand>
</feature>
<feature type="binding site" evidence="1">
    <location>
        <position position="184"/>
    </location>
    <ligand>
        <name>UDP-N-acetyl-alpha-D-muramoyl-L-alanyl-D-glutamate</name>
        <dbReference type="ChEBI" id="CHEBI:83900"/>
    </ligand>
</feature>
<feature type="binding site" evidence="1">
    <location>
        <position position="186"/>
    </location>
    <ligand>
        <name>UDP-N-acetyl-alpha-D-muramoyl-L-alanyl-D-glutamate</name>
        <dbReference type="ChEBI" id="CHEBI:83900"/>
    </ligand>
</feature>
<feature type="binding site" evidence="1">
    <location>
        <position position="387"/>
    </location>
    <ligand>
        <name>meso-2,6-diaminopimelate</name>
        <dbReference type="ChEBI" id="CHEBI:57791"/>
    </ligand>
</feature>
<feature type="binding site" evidence="1">
    <location>
        <begin position="411"/>
        <end position="414"/>
    </location>
    <ligand>
        <name>meso-2,6-diaminopimelate</name>
        <dbReference type="ChEBI" id="CHEBI:57791"/>
    </ligand>
</feature>
<feature type="binding site" evidence="1">
    <location>
        <position position="462"/>
    </location>
    <ligand>
        <name>meso-2,6-diaminopimelate</name>
        <dbReference type="ChEBI" id="CHEBI:57791"/>
    </ligand>
</feature>
<feature type="binding site" evidence="1">
    <location>
        <position position="466"/>
    </location>
    <ligand>
        <name>meso-2,6-diaminopimelate</name>
        <dbReference type="ChEBI" id="CHEBI:57791"/>
    </ligand>
</feature>
<feature type="modified residue" description="N6-carboxylysine" evidence="1">
    <location>
        <position position="218"/>
    </location>
</feature>
<gene>
    <name evidence="1" type="primary">murE</name>
    <name type="ordered locus">PP_1332</name>
</gene>
<dbReference type="EC" id="6.3.2.13" evidence="1"/>
<dbReference type="EMBL" id="AE015451">
    <property type="protein sequence ID" value="AAN66955.1"/>
    <property type="molecule type" value="Genomic_DNA"/>
</dbReference>
<dbReference type="RefSeq" id="NP_743491.1">
    <property type="nucleotide sequence ID" value="NC_002947.4"/>
</dbReference>
<dbReference type="SMR" id="Q88N81"/>
<dbReference type="STRING" id="160488.PP_1332"/>
<dbReference type="PaxDb" id="160488-PP_1332"/>
<dbReference type="KEGG" id="ppu:PP_1332"/>
<dbReference type="PATRIC" id="fig|160488.4.peg.1411"/>
<dbReference type="eggNOG" id="COG0769">
    <property type="taxonomic scope" value="Bacteria"/>
</dbReference>
<dbReference type="HOGENOM" id="CLU_022291_4_1_6"/>
<dbReference type="OrthoDB" id="9800958at2"/>
<dbReference type="PhylomeDB" id="Q88N81"/>
<dbReference type="BioCyc" id="PPUT160488:G1G01-1419-MONOMER"/>
<dbReference type="UniPathway" id="UPA00219"/>
<dbReference type="Proteomes" id="UP000000556">
    <property type="component" value="Chromosome"/>
</dbReference>
<dbReference type="GO" id="GO:0005737">
    <property type="term" value="C:cytoplasm"/>
    <property type="evidence" value="ECO:0007669"/>
    <property type="project" value="UniProtKB-SubCell"/>
</dbReference>
<dbReference type="GO" id="GO:0005524">
    <property type="term" value="F:ATP binding"/>
    <property type="evidence" value="ECO:0007669"/>
    <property type="project" value="UniProtKB-UniRule"/>
</dbReference>
<dbReference type="GO" id="GO:0000287">
    <property type="term" value="F:magnesium ion binding"/>
    <property type="evidence" value="ECO:0007669"/>
    <property type="project" value="UniProtKB-UniRule"/>
</dbReference>
<dbReference type="GO" id="GO:0008765">
    <property type="term" value="F:UDP-N-acetylmuramoylalanyl-D-glutamate-2,6-diaminopimelate ligase activity"/>
    <property type="evidence" value="ECO:0007669"/>
    <property type="project" value="UniProtKB-UniRule"/>
</dbReference>
<dbReference type="GO" id="GO:0051301">
    <property type="term" value="P:cell division"/>
    <property type="evidence" value="ECO:0007669"/>
    <property type="project" value="UniProtKB-KW"/>
</dbReference>
<dbReference type="GO" id="GO:0071555">
    <property type="term" value="P:cell wall organization"/>
    <property type="evidence" value="ECO:0007669"/>
    <property type="project" value="UniProtKB-KW"/>
</dbReference>
<dbReference type="GO" id="GO:0009252">
    <property type="term" value="P:peptidoglycan biosynthetic process"/>
    <property type="evidence" value="ECO:0007669"/>
    <property type="project" value="UniProtKB-UniRule"/>
</dbReference>
<dbReference type="GO" id="GO:0008360">
    <property type="term" value="P:regulation of cell shape"/>
    <property type="evidence" value="ECO:0007669"/>
    <property type="project" value="UniProtKB-KW"/>
</dbReference>
<dbReference type="Gene3D" id="3.90.190.20">
    <property type="entry name" value="Mur ligase, C-terminal domain"/>
    <property type="match status" value="1"/>
</dbReference>
<dbReference type="Gene3D" id="3.40.1190.10">
    <property type="entry name" value="Mur-like, catalytic domain"/>
    <property type="match status" value="1"/>
</dbReference>
<dbReference type="Gene3D" id="3.40.1390.10">
    <property type="entry name" value="MurE/MurF, N-terminal domain"/>
    <property type="match status" value="1"/>
</dbReference>
<dbReference type="HAMAP" id="MF_00208">
    <property type="entry name" value="MurE"/>
    <property type="match status" value="1"/>
</dbReference>
<dbReference type="InterPro" id="IPR036565">
    <property type="entry name" value="Mur-like_cat_sf"/>
</dbReference>
<dbReference type="InterPro" id="IPR004101">
    <property type="entry name" value="Mur_ligase_C"/>
</dbReference>
<dbReference type="InterPro" id="IPR036615">
    <property type="entry name" value="Mur_ligase_C_dom_sf"/>
</dbReference>
<dbReference type="InterPro" id="IPR013221">
    <property type="entry name" value="Mur_ligase_cen"/>
</dbReference>
<dbReference type="InterPro" id="IPR000713">
    <property type="entry name" value="Mur_ligase_N"/>
</dbReference>
<dbReference type="InterPro" id="IPR035911">
    <property type="entry name" value="MurE/MurF_N"/>
</dbReference>
<dbReference type="InterPro" id="IPR005761">
    <property type="entry name" value="UDP-N-AcMur-Glu-dNH2Pim_ligase"/>
</dbReference>
<dbReference type="NCBIfam" id="TIGR01085">
    <property type="entry name" value="murE"/>
    <property type="match status" value="1"/>
</dbReference>
<dbReference type="NCBIfam" id="NF001124">
    <property type="entry name" value="PRK00139.1-2"/>
    <property type="match status" value="1"/>
</dbReference>
<dbReference type="NCBIfam" id="NF001126">
    <property type="entry name" value="PRK00139.1-4"/>
    <property type="match status" value="1"/>
</dbReference>
<dbReference type="PANTHER" id="PTHR23135">
    <property type="entry name" value="MUR LIGASE FAMILY MEMBER"/>
    <property type="match status" value="1"/>
</dbReference>
<dbReference type="PANTHER" id="PTHR23135:SF4">
    <property type="entry name" value="UDP-N-ACETYLMURAMOYL-L-ALANYL-D-GLUTAMATE--2,6-DIAMINOPIMELATE LIGASE MURE HOMOLOG, CHLOROPLASTIC"/>
    <property type="match status" value="1"/>
</dbReference>
<dbReference type="Pfam" id="PF01225">
    <property type="entry name" value="Mur_ligase"/>
    <property type="match status" value="1"/>
</dbReference>
<dbReference type="Pfam" id="PF02875">
    <property type="entry name" value="Mur_ligase_C"/>
    <property type="match status" value="1"/>
</dbReference>
<dbReference type="Pfam" id="PF08245">
    <property type="entry name" value="Mur_ligase_M"/>
    <property type="match status" value="1"/>
</dbReference>
<dbReference type="SUPFAM" id="SSF53623">
    <property type="entry name" value="MurD-like peptide ligases, catalytic domain"/>
    <property type="match status" value="1"/>
</dbReference>
<dbReference type="SUPFAM" id="SSF53244">
    <property type="entry name" value="MurD-like peptide ligases, peptide-binding domain"/>
    <property type="match status" value="1"/>
</dbReference>
<dbReference type="SUPFAM" id="SSF63418">
    <property type="entry name" value="MurE/MurF N-terminal domain"/>
    <property type="match status" value="1"/>
</dbReference>
<protein>
    <recommendedName>
        <fullName evidence="1">UDP-N-acetylmuramoyl-L-alanyl-D-glutamate--2,6-diaminopimelate ligase</fullName>
        <ecNumber evidence="1">6.3.2.13</ecNumber>
    </recommendedName>
    <alternativeName>
        <fullName evidence="1">Meso-A2pm-adding enzyme</fullName>
    </alternativeName>
    <alternativeName>
        <fullName evidence="1">Meso-diaminopimelate-adding enzyme</fullName>
    </alternativeName>
    <alternativeName>
        <fullName evidence="1">UDP-MurNAc-L-Ala-D-Glu:meso-diaminopimelate ligase</fullName>
    </alternativeName>
    <alternativeName>
        <fullName evidence="1">UDP-MurNAc-tripeptide synthetase</fullName>
    </alternativeName>
    <alternativeName>
        <fullName evidence="1">UDP-N-acetylmuramyl-tripeptide synthetase</fullName>
    </alternativeName>
</protein>
<name>MURE_PSEPK</name>
<comment type="function">
    <text evidence="1">Catalyzes the addition of meso-diaminopimelic acid to the nucleotide precursor UDP-N-acetylmuramoyl-L-alanyl-D-glutamate (UMAG) in the biosynthesis of bacterial cell-wall peptidoglycan.</text>
</comment>
<comment type="catalytic activity">
    <reaction evidence="1">
        <text>UDP-N-acetyl-alpha-D-muramoyl-L-alanyl-D-glutamate + meso-2,6-diaminopimelate + ATP = UDP-N-acetyl-alpha-D-muramoyl-L-alanyl-gamma-D-glutamyl-meso-2,6-diaminopimelate + ADP + phosphate + H(+)</text>
        <dbReference type="Rhea" id="RHEA:23676"/>
        <dbReference type="ChEBI" id="CHEBI:15378"/>
        <dbReference type="ChEBI" id="CHEBI:30616"/>
        <dbReference type="ChEBI" id="CHEBI:43474"/>
        <dbReference type="ChEBI" id="CHEBI:57791"/>
        <dbReference type="ChEBI" id="CHEBI:83900"/>
        <dbReference type="ChEBI" id="CHEBI:83905"/>
        <dbReference type="ChEBI" id="CHEBI:456216"/>
        <dbReference type="EC" id="6.3.2.13"/>
    </reaction>
</comment>
<comment type="cofactor">
    <cofactor evidence="1">
        <name>Mg(2+)</name>
        <dbReference type="ChEBI" id="CHEBI:18420"/>
    </cofactor>
</comment>
<comment type="pathway">
    <text evidence="1">Cell wall biogenesis; peptidoglycan biosynthesis.</text>
</comment>
<comment type="subcellular location">
    <subcellularLocation>
        <location evidence="1">Cytoplasm</location>
    </subcellularLocation>
</comment>
<comment type="PTM">
    <text evidence="1">Carboxylation is probably crucial for Mg(2+) binding and, consequently, for the gamma-phosphate positioning of ATP.</text>
</comment>
<comment type="similarity">
    <text evidence="1">Belongs to the MurCDEF family. MurE subfamily.</text>
</comment>
<accession>Q88N81</accession>
<reference key="1">
    <citation type="journal article" date="2002" name="Environ. Microbiol.">
        <title>Complete genome sequence and comparative analysis of the metabolically versatile Pseudomonas putida KT2440.</title>
        <authorList>
            <person name="Nelson K.E."/>
            <person name="Weinel C."/>
            <person name="Paulsen I.T."/>
            <person name="Dodson R.J."/>
            <person name="Hilbert H."/>
            <person name="Martins dos Santos V.A.P."/>
            <person name="Fouts D.E."/>
            <person name="Gill S.R."/>
            <person name="Pop M."/>
            <person name="Holmes M."/>
            <person name="Brinkac L.M."/>
            <person name="Beanan M.J."/>
            <person name="DeBoy R.T."/>
            <person name="Daugherty S.C."/>
            <person name="Kolonay J.F."/>
            <person name="Madupu R."/>
            <person name="Nelson W.C."/>
            <person name="White O."/>
            <person name="Peterson J.D."/>
            <person name="Khouri H.M."/>
            <person name="Hance I."/>
            <person name="Chris Lee P."/>
            <person name="Holtzapple E.K."/>
            <person name="Scanlan D."/>
            <person name="Tran K."/>
            <person name="Moazzez A."/>
            <person name="Utterback T.R."/>
            <person name="Rizzo M."/>
            <person name="Lee K."/>
            <person name="Kosack D."/>
            <person name="Moestl D."/>
            <person name="Wedler H."/>
            <person name="Lauber J."/>
            <person name="Stjepandic D."/>
            <person name="Hoheisel J."/>
            <person name="Straetz M."/>
            <person name="Heim S."/>
            <person name="Kiewitz C."/>
            <person name="Eisen J.A."/>
            <person name="Timmis K.N."/>
            <person name="Duesterhoeft A."/>
            <person name="Tuemmler B."/>
            <person name="Fraser C.M."/>
        </authorList>
    </citation>
    <scope>NUCLEOTIDE SEQUENCE [LARGE SCALE GENOMIC DNA]</scope>
    <source>
        <strain>ATCC 47054 / DSM 6125 / CFBP 8728 / NCIMB 11950 / KT2440</strain>
    </source>
</reference>